<protein>
    <recommendedName>
        <fullName evidence="1">Sulfurtransferase TusD</fullName>
        <ecNumber evidence="1">2.8.1.-</ecNumber>
    </recommendedName>
    <alternativeName>
        <fullName evidence="1">tRNA 2-thiouridine synthesizing protein D</fullName>
    </alternativeName>
</protein>
<gene>
    <name evidence="1" type="primary">tusD</name>
    <name type="ordered locus">SFV_3350</name>
</gene>
<dbReference type="EC" id="2.8.1.-" evidence="1"/>
<dbReference type="EMBL" id="CP000266">
    <property type="protein sequence ID" value="ABF05393.1"/>
    <property type="molecule type" value="Genomic_DNA"/>
</dbReference>
<dbReference type="RefSeq" id="WP_001209706.1">
    <property type="nucleotide sequence ID" value="NC_008258.1"/>
</dbReference>
<dbReference type="SMR" id="Q0SZX2"/>
<dbReference type="KEGG" id="sfv:SFV_3350"/>
<dbReference type="HOGENOM" id="CLU_132095_0_0_6"/>
<dbReference type="Proteomes" id="UP000000659">
    <property type="component" value="Chromosome"/>
</dbReference>
<dbReference type="GO" id="GO:1990228">
    <property type="term" value="C:sulfurtransferase complex"/>
    <property type="evidence" value="ECO:0007669"/>
    <property type="project" value="TreeGrafter"/>
</dbReference>
<dbReference type="GO" id="GO:0097163">
    <property type="term" value="F:sulfur carrier activity"/>
    <property type="evidence" value="ECO:0007669"/>
    <property type="project" value="TreeGrafter"/>
</dbReference>
<dbReference type="GO" id="GO:0016783">
    <property type="term" value="F:sulfurtransferase activity"/>
    <property type="evidence" value="ECO:0007669"/>
    <property type="project" value="UniProtKB-UniRule"/>
</dbReference>
<dbReference type="GO" id="GO:0002143">
    <property type="term" value="P:tRNA wobble position uridine thiolation"/>
    <property type="evidence" value="ECO:0007669"/>
    <property type="project" value="TreeGrafter"/>
</dbReference>
<dbReference type="FunFam" id="3.40.1260.10:FF:000001">
    <property type="entry name" value="Sulfurtransferase TusD"/>
    <property type="match status" value="1"/>
</dbReference>
<dbReference type="Gene3D" id="3.40.1260.10">
    <property type="entry name" value="DsrEFH-like"/>
    <property type="match status" value="1"/>
</dbReference>
<dbReference type="HAMAP" id="MF_00390">
    <property type="entry name" value="Thiourid_synth_D"/>
    <property type="match status" value="1"/>
</dbReference>
<dbReference type="InterPro" id="IPR027396">
    <property type="entry name" value="DsrEFH-like"/>
</dbReference>
<dbReference type="InterPro" id="IPR003787">
    <property type="entry name" value="Sulphur_relay_DsrE/F-like"/>
</dbReference>
<dbReference type="InterPro" id="IPR017463">
    <property type="entry name" value="Sulphur_relay_TusD/DsrE"/>
</dbReference>
<dbReference type="NCBIfam" id="NF001237">
    <property type="entry name" value="PRK00207.1"/>
    <property type="match status" value="1"/>
</dbReference>
<dbReference type="NCBIfam" id="TIGR03012">
    <property type="entry name" value="sulf_tusD_dsrE"/>
    <property type="match status" value="1"/>
</dbReference>
<dbReference type="PANTHER" id="PTHR34874">
    <property type="entry name" value="PROTEIN YCHN"/>
    <property type="match status" value="1"/>
</dbReference>
<dbReference type="PANTHER" id="PTHR34874:SF3">
    <property type="entry name" value="SULFURTRANSFERASE TUSD"/>
    <property type="match status" value="1"/>
</dbReference>
<dbReference type="Pfam" id="PF02635">
    <property type="entry name" value="DsrE"/>
    <property type="match status" value="1"/>
</dbReference>
<dbReference type="SUPFAM" id="SSF75169">
    <property type="entry name" value="DsrEFH-like"/>
    <property type="match status" value="1"/>
</dbReference>
<reference key="1">
    <citation type="journal article" date="2006" name="BMC Genomics">
        <title>Complete genome sequence of Shigella flexneri 5b and comparison with Shigella flexneri 2a.</title>
        <authorList>
            <person name="Nie H."/>
            <person name="Yang F."/>
            <person name="Zhang X."/>
            <person name="Yang J."/>
            <person name="Chen L."/>
            <person name="Wang J."/>
            <person name="Xiong Z."/>
            <person name="Peng J."/>
            <person name="Sun L."/>
            <person name="Dong J."/>
            <person name="Xue Y."/>
            <person name="Xu X."/>
            <person name="Chen S."/>
            <person name="Yao Z."/>
            <person name="Shen Y."/>
            <person name="Jin Q."/>
        </authorList>
    </citation>
    <scope>NUCLEOTIDE SEQUENCE [LARGE SCALE GENOMIC DNA]</scope>
    <source>
        <strain>8401</strain>
    </source>
</reference>
<comment type="function">
    <text evidence="1">Part of a sulfur-relay system required for 2-thiolation of 5-methylaminomethyl-2-thiouridine (mnm(5)s(2)U) at tRNA wobble positions. Accepts sulfur from TusA and transfers it in turn to TusE.</text>
</comment>
<comment type="subunit">
    <text evidence="1">Heterohexamer, formed by a dimer of trimers. The hexameric TusBCD complex contains 2 copies each of TusB, TusC and TusD. The TusBCD complex interacts with TusE.</text>
</comment>
<comment type="subcellular location">
    <subcellularLocation>
        <location evidence="1">Cytoplasm</location>
    </subcellularLocation>
</comment>
<comment type="similarity">
    <text evidence="1">Belongs to the DsrE/TusD family.</text>
</comment>
<sequence length="128" mass="13623">MRFAIVVTGPAYGTQQASSAFQFAQALIAEGHKLSSVFFYREGVYNANQLTSPASDEFDLVRGWQQLNAQHGVALNICVAAALRRGIVDETEAGRLGLASSNLQPGFTLSGLGALAEASLTCDRVVQF</sequence>
<accession>Q0SZX2</accession>
<evidence type="ECO:0000255" key="1">
    <source>
        <dbReference type="HAMAP-Rule" id="MF_00390"/>
    </source>
</evidence>
<name>TUSD_SHIF8</name>
<feature type="chain" id="PRO_1000013256" description="Sulfurtransferase TusD">
    <location>
        <begin position="1"/>
        <end position="128"/>
    </location>
</feature>
<feature type="active site" description="Cysteine persulfide intermediate" evidence="1">
    <location>
        <position position="78"/>
    </location>
</feature>
<keyword id="KW-0963">Cytoplasm</keyword>
<keyword id="KW-0808">Transferase</keyword>
<keyword id="KW-0819">tRNA processing</keyword>
<proteinExistence type="inferred from homology"/>
<organism>
    <name type="scientific">Shigella flexneri serotype 5b (strain 8401)</name>
    <dbReference type="NCBI Taxonomy" id="373384"/>
    <lineage>
        <taxon>Bacteria</taxon>
        <taxon>Pseudomonadati</taxon>
        <taxon>Pseudomonadota</taxon>
        <taxon>Gammaproteobacteria</taxon>
        <taxon>Enterobacterales</taxon>
        <taxon>Enterobacteriaceae</taxon>
        <taxon>Shigella</taxon>
    </lineage>
</organism>